<proteinExistence type="inferred from homology"/>
<keyword id="KW-0963">Cytoplasm</keyword>
<keyword id="KW-0227">DNA damage</keyword>
<keyword id="KW-0233">DNA recombination</keyword>
<keyword id="KW-0234">DNA repair</keyword>
<keyword id="KW-0238">DNA-binding</keyword>
<protein>
    <recommendedName>
        <fullName evidence="1">Holliday junction branch migration complex subunit RuvA</fullName>
    </recommendedName>
</protein>
<comment type="function">
    <text evidence="1">The RuvA-RuvB-RuvC complex processes Holliday junction (HJ) DNA during genetic recombination and DNA repair, while the RuvA-RuvB complex plays an important role in the rescue of blocked DNA replication forks via replication fork reversal (RFR). RuvA specifically binds to HJ cruciform DNA, conferring on it an open structure. The RuvB hexamer acts as an ATP-dependent pump, pulling dsDNA into and through the RuvAB complex. HJ branch migration allows RuvC to scan DNA until it finds its consensus sequence, where it cleaves and resolves the cruciform DNA.</text>
</comment>
<comment type="subunit">
    <text evidence="1">Homotetramer. Forms an RuvA(8)-RuvB(12)-Holliday junction (HJ) complex. HJ DNA is sandwiched between 2 RuvA tetramers; dsDNA enters through RuvA and exits via RuvB. An RuvB hexamer assembles on each DNA strand where it exits the tetramer. Each RuvB hexamer is contacted by two RuvA subunits (via domain III) on 2 adjacent RuvB subunits; this complex drives branch migration. In the full resolvosome a probable DNA-RuvA(4)-RuvB(12)-RuvC(2) complex forms which resolves the HJ.</text>
</comment>
<comment type="subcellular location">
    <subcellularLocation>
        <location evidence="1">Cytoplasm</location>
    </subcellularLocation>
</comment>
<comment type="domain">
    <text evidence="1">Has three domains with a flexible linker between the domains II and III and assumes an 'L' shape. Domain III is highly mobile and contacts RuvB.</text>
</comment>
<comment type="similarity">
    <text evidence="1">Belongs to the RuvA family.</text>
</comment>
<sequence length="216" mass="23563">MISFIKGVLIEKDPTALLIDVNGIGYEVFVPMTTFYTLGDIDSQVSLYTHFVVREDAQQLYGFKSKVDKKVFQELIKVNGIGARTAIAILSGMDSKTLLHCIENKDYALLATVPGIGKKTAERLVIEIYDKLLKMANEIYAQTSGTTTTSQDSQAQQAPTSVVLANSIFNESVDALLALGYKQKDAEKMARSAMGDATTAAEVIRKALQGSIKSKR</sequence>
<dbReference type="EMBL" id="CP000915">
    <property type="protein sequence ID" value="ACD31075.1"/>
    <property type="molecule type" value="Genomic_DNA"/>
</dbReference>
<dbReference type="SMR" id="B2SH67"/>
<dbReference type="KEGG" id="ftm:FTM_1200"/>
<dbReference type="HOGENOM" id="CLU_087936_0_0_6"/>
<dbReference type="GO" id="GO:0005737">
    <property type="term" value="C:cytoplasm"/>
    <property type="evidence" value="ECO:0007669"/>
    <property type="project" value="UniProtKB-SubCell"/>
</dbReference>
<dbReference type="GO" id="GO:0009379">
    <property type="term" value="C:Holliday junction helicase complex"/>
    <property type="evidence" value="ECO:0007669"/>
    <property type="project" value="InterPro"/>
</dbReference>
<dbReference type="GO" id="GO:0048476">
    <property type="term" value="C:Holliday junction resolvase complex"/>
    <property type="evidence" value="ECO:0007669"/>
    <property type="project" value="UniProtKB-UniRule"/>
</dbReference>
<dbReference type="GO" id="GO:0005524">
    <property type="term" value="F:ATP binding"/>
    <property type="evidence" value="ECO:0007669"/>
    <property type="project" value="InterPro"/>
</dbReference>
<dbReference type="GO" id="GO:0000400">
    <property type="term" value="F:four-way junction DNA binding"/>
    <property type="evidence" value="ECO:0007669"/>
    <property type="project" value="UniProtKB-UniRule"/>
</dbReference>
<dbReference type="GO" id="GO:0009378">
    <property type="term" value="F:four-way junction helicase activity"/>
    <property type="evidence" value="ECO:0007669"/>
    <property type="project" value="InterPro"/>
</dbReference>
<dbReference type="GO" id="GO:0006310">
    <property type="term" value="P:DNA recombination"/>
    <property type="evidence" value="ECO:0007669"/>
    <property type="project" value="UniProtKB-UniRule"/>
</dbReference>
<dbReference type="GO" id="GO:0006281">
    <property type="term" value="P:DNA repair"/>
    <property type="evidence" value="ECO:0007669"/>
    <property type="project" value="UniProtKB-UniRule"/>
</dbReference>
<dbReference type="CDD" id="cd14332">
    <property type="entry name" value="UBA_RuvA_C"/>
    <property type="match status" value="1"/>
</dbReference>
<dbReference type="Gene3D" id="1.10.150.20">
    <property type="entry name" value="5' to 3' exonuclease, C-terminal subdomain"/>
    <property type="match status" value="1"/>
</dbReference>
<dbReference type="Gene3D" id="1.10.8.10">
    <property type="entry name" value="DNA helicase RuvA subunit, C-terminal domain"/>
    <property type="match status" value="1"/>
</dbReference>
<dbReference type="Gene3D" id="2.40.50.140">
    <property type="entry name" value="Nucleic acid-binding proteins"/>
    <property type="match status" value="1"/>
</dbReference>
<dbReference type="HAMAP" id="MF_00031">
    <property type="entry name" value="DNA_HJ_migration_RuvA"/>
    <property type="match status" value="1"/>
</dbReference>
<dbReference type="InterPro" id="IPR013849">
    <property type="entry name" value="DNA_helicase_Holl-junc_RuvA_I"/>
</dbReference>
<dbReference type="InterPro" id="IPR003583">
    <property type="entry name" value="Hlx-hairpin-Hlx_DNA-bd_motif"/>
</dbReference>
<dbReference type="InterPro" id="IPR012340">
    <property type="entry name" value="NA-bd_OB-fold"/>
</dbReference>
<dbReference type="InterPro" id="IPR000085">
    <property type="entry name" value="RuvA"/>
</dbReference>
<dbReference type="InterPro" id="IPR010994">
    <property type="entry name" value="RuvA_2-like"/>
</dbReference>
<dbReference type="InterPro" id="IPR011114">
    <property type="entry name" value="RuvA_C"/>
</dbReference>
<dbReference type="InterPro" id="IPR036267">
    <property type="entry name" value="RuvA_C_sf"/>
</dbReference>
<dbReference type="NCBIfam" id="TIGR00084">
    <property type="entry name" value="ruvA"/>
    <property type="match status" value="1"/>
</dbReference>
<dbReference type="Pfam" id="PF14520">
    <property type="entry name" value="HHH_5"/>
    <property type="match status" value="1"/>
</dbReference>
<dbReference type="Pfam" id="PF07499">
    <property type="entry name" value="RuvA_C"/>
    <property type="match status" value="1"/>
</dbReference>
<dbReference type="Pfam" id="PF01330">
    <property type="entry name" value="RuvA_N"/>
    <property type="match status" value="1"/>
</dbReference>
<dbReference type="SMART" id="SM00278">
    <property type="entry name" value="HhH1"/>
    <property type="match status" value="2"/>
</dbReference>
<dbReference type="SUPFAM" id="SSF46929">
    <property type="entry name" value="DNA helicase RuvA subunit, C-terminal domain"/>
    <property type="match status" value="1"/>
</dbReference>
<dbReference type="SUPFAM" id="SSF50249">
    <property type="entry name" value="Nucleic acid-binding proteins"/>
    <property type="match status" value="1"/>
</dbReference>
<dbReference type="SUPFAM" id="SSF47781">
    <property type="entry name" value="RuvA domain 2-like"/>
    <property type="match status" value="1"/>
</dbReference>
<name>RUVA_FRATM</name>
<feature type="chain" id="PRO_1000090319" description="Holliday junction branch migration complex subunit RuvA">
    <location>
        <begin position="1"/>
        <end position="216"/>
    </location>
</feature>
<feature type="region of interest" description="Domain I" evidence="1">
    <location>
        <begin position="1"/>
        <end position="64"/>
    </location>
</feature>
<feature type="region of interest" description="Domain II" evidence="1">
    <location>
        <begin position="65"/>
        <end position="143"/>
    </location>
</feature>
<feature type="region of interest" description="Flexible linker" evidence="1">
    <location>
        <begin position="144"/>
        <end position="163"/>
    </location>
</feature>
<feature type="region of interest" description="Domain III" evidence="1">
    <location>
        <begin position="164"/>
        <end position="216"/>
    </location>
</feature>
<organism>
    <name type="scientific">Francisella tularensis subsp. mediasiatica (strain FSC147)</name>
    <dbReference type="NCBI Taxonomy" id="441952"/>
    <lineage>
        <taxon>Bacteria</taxon>
        <taxon>Pseudomonadati</taxon>
        <taxon>Pseudomonadota</taxon>
        <taxon>Gammaproteobacteria</taxon>
        <taxon>Thiotrichales</taxon>
        <taxon>Francisellaceae</taxon>
        <taxon>Francisella</taxon>
    </lineage>
</organism>
<reference key="1">
    <citation type="journal article" date="2009" name="PLoS Pathog.">
        <title>Molecular evolutionary consequences of niche restriction in Francisella tularensis, a facultative intracellular pathogen.</title>
        <authorList>
            <person name="Larsson P."/>
            <person name="Elfsmark D."/>
            <person name="Svensson K."/>
            <person name="Wikstroem P."/>
            <person name="Forsman M."/>
            <person name="Brettin T."/>
            <person name="Keim P."/>
            <person name="Johansson A."/>
        </authorList>
    </citation>
    <scope>NUCLEOTIDE SEQUENCE [LARGE SCALE GENOMIC DNA]</scope>
    <source>
        <strain>FSC147</strain>
    </source>
</reference>
<accession>B2SH67</accession>
<evidence type="ECO:0000255" key="1">
    <source>
        <dbReference type="HAMAP-Rule" id="MF_00031"/>
    </source>
</evidence>
<gene>
    <name evidence="1" type="primary">ruvA</name>
    <name type="ordered locus">FTM_1200</name>
</gene>